<name>TSX_KLEPN</name>
<organism>
    <name type="scientific">Klebsiella pneumoniae</name>
    <dbReference type="NCBI Taxonomy" id="573"/>
    <lineage>
        <taxon>Bacteria</taxon>
        <taxon>Pseudomonadati</taxon>
        <taxon>Pseudomonadota</taxon>
        <taxon>Gammaproteobacteria</taxon>
        <taxon>Enterobacterales</taxon>
        <taxon>Enterobacteriaceae</taxon>
        <taxon>Klebsiella/Raoultella group</taxon>
        <taxon>Klebsiella</taxon>
        <taxon>Klebsiella pneumoniae complex</taxon>
    </lineage>
</organism>
<comment type="function">
    <text evidence="2">Functions as a substrate-specific channel for nucleosides and deoxynucleosides. Also functions in albicidin uptake and as receptor for colicin K. Also is a receptor for several Tsx-specific bacteriophages.</text>
</comment>
<comment type="subcellular location">
    <subcellularLocation>
        <location evidence="2">Cell outer membrane</location>
        <topology evidence="5">Multi-pass membrane protein</topology>
    </subcellularLocation>
</comment>
<comment type="similarity">
    <text evidence="4">Belongs to the nucleoside-specific channel-forming outer membrane porin (Tsx) (TC 1.B.10) family.</text>
</comment>
<proteinExistence type="inferred from homology"/>
<protein>
    <recommendedName>
        <fullName evidence="4">Nucleoside-specific channel-forming protein Tsx</fullName>
    </recommendedName>
</protein>
<evidence type="ECO:0000255" key="1"/>
<evidence type="ECO:0000269" key="2">
    <source>
    </source>
</evidence>
<evidence type="ECO:0000303" key="3">
    <source>
    </source>
</evidence>
<evidence type="ECO:0000305" key="4"/>
<evidence type="ECO:0000305" key="5">
    <source>
    </source>
</evidence>
<keyword id="KW-0998">Cell outer membrane</keyword>
<keyword id="KW-0406">Ion transport</keyword>
<keyword id="KW-0472">Membrane</keyword>
<keyword id="KW-0626">Porin</keyword>
<keyword id="KW-0732">Signal</keyword>
<keyword id="KW-0812">Transmembrane</keyword>
<keyword id="KW-1134">Transmembrane beta strand</keyword>
<keyword id="KW-0813">Transport</keyword>
<sequence>MKKTLLAAGAVVALSTTFAAGAAENDKPQYLSDWWHQSVNVVGSYHTRFGPQIRNDTYLEYEAFAKKDWFDFYGYIDAPVFFGGNSTAKGIWNKGSPLFMEIEPRFSIDKLTNTDLSFGPFKEWYFANNYIYDMGRNDSQEQSTWYMGLGTDIDTGLPMSLSLNVYAKYQWQNYGASNENEWDGYRFKVKYFVPLTDLWGGSLSYIGFTNFDWGSDLGDDNFYDLNGKHARTSNSIASSHILALNYAHWHYSIVARYFHNGGQWADDAKLNFGDGPFSVRSTGWGGYFVVGYNF</sequence>
<feature type="signal peptide" evidence="1">
    <location>
        <begin position="1"/>
        <end position="22"/>
    </location>
</feature>
<feature type="chain" id="PRO_0000025193" description="Nucleoside-specific channel-forming protein Tsx">
    <location>
        <begin position="23"/>
        <end position="294"/>
    </location>
</feature>
<dbReference type="EMBL" id="Z26656">
    <property type="protein sequence ID" value="CAA81397.1"/>
    <property type="molecule type" value="Genomic_DNA"/>
</dbReference>
<dbReference type="PIR" id="S49152">
    <property type="entry name" value="S49152"/>
</dbReference>
<dbReference type="RefSeq" id="WP_002890412.1">
    <property type="nucleotide sequence ID" value="NZ_WYAM01000013.1"/>
</dbReference>
<dbReference type="SMR" id="P40786"/>
<dbReference type="OMA" id="KSTGWGY"/>
<dbReference type="GO" id="GO:0009279">
    <property type="term" value="C:cell outer membrane"/>
    <property type="evidence" value="ECO:0007669"/>
    <property type="project" value="UniProtKB-SubCell"/>
</dbReference>
<dbReference type="GO" id="GO:0046930">
    <property type="term" value="C:pore complex"/>
    <property type="evidence" value="ECO:0007669"/>
    <property type="project" value="UniProtKB-KW"/>
</dbReference>
<dbReference type="GO" id="GO:0005337">
    <property type="term" value="F:nucleoside transmembrane transporter activity"/>
    <property type="evidence" value="ECO:0007669"/>
    <property type="project" value="InterPro"/>
</dbReference>
<dbReference type="GO" id="GO:0015288">
    <property type="term" value="F:porin activity"/>
    <property type="evidence" value="ECO:0007669"/>
    <property type="project" value="UniProtKB-KW"/>
</dbReference>
<dbReference type="GO" id="GO:0006811">
    <property type="term" value="P:monoatomic ion transport"/>
    <property type="evidence" value="ECO:0007669"/>
    <property type="project" value="UniProtKB-KW"/>
</dbReference>
<dbReference type="Gene3D" id="2.40.230.20">
    <property type="entry name" value="Nucleoside-specific channel-forming protein, Tsx-like"/>
    <property type="match status" value="1"/>
</dbReference>
<dbReference type="InterPro" id="IPR003055">
    <property type="entry name" value="Channel_Tsx"/>
</dbReference>
<dbReference type="InterPro" id="IPR018013">
    <property type="entry name" value="Channel_Tsx-like"/>
</dbReference>
<dbReference type="InterPro" id="IPR036777">
    <property type="entry name" value="Channel_Tsx-like_sf"/>
</dbReference>
<dbReference type="NCBIfam" id="NF011686">
    <property type="entry name" value="PRK15106.1"/>
    <property type="match status" value="1"/>
</dbReference>
<dbReference type="Pfam" id="PF03502">
    <property type="entry name" value="Channel_Tsx"/>
    <property type="match status" value="1"/>
</dbReference>
<dbReference type="PRINTS" id="PR01277">
    <property type="entry name" value="CHANNELTSX"/>
</dbReference>
<dbReference type="SUPFAM" id="SSF111364">
    <property type="entry name" value="Tsx-like channel"/>
    <property type="match status" value="1"/>
</dbReference>
<gene>
    <name evidence="3" type="primary">tsx</name>
</gene>
<accession>P40786</accession>
<reference key="1">
    <citation type="journal article" date="1997" name="Microbiology">
        <title>The nucleoside-specific Tsx channel from the outer membrane of Salmonella typhimurium, Klebsiella pneumoniae and Enterobacter aerogenes: functional characterization and DNA sequence analysis of the tsx genes.</title>
        <authorList>
            <person name="Nieweg A."/>
            <person name="Bremer E."/>
        </authorList>
    </citation>
    <scope>NUCLEOTIDE SEQUENCE [GENOMIC DNA]</scope>
    <scope>FUNCTION</scope>
    <scope>SUBCELLULAR LOCATION</scope>
    <source>
        <strain>1033-5P14 / KAY2026</strain>
    </source>
</reference>